<evidence type="ECO:0000255" key="1">
    <source>
        <dbReference type="HAMAP-Rule" id="MF_00278"/>
    </source>
</evidence>
<gene>
    <name evidence="1" type="primary">hisH</name>
    <name type="ordered locus">PMT9312_1071</name>
</gene>
<comment type="function">
    <text evidence="1">IGPS catalyzes the conversion of PRFAR and glutamine to IGP, AICAR and glutamate. The HisH subunit catalyzes the hydrolysis of glutamine to glutamate and ammonia as part of the synthesis of IGP and AICAR. The resulting ammonia molecule is channeled to the active site of HisF.</text>
</comment>
<comment type="catalytic activity">
    <reaction evidence="1">
        <text>5-[(5-phospho-1-deoxy-D-ribulos-1-ylimino)methylamino]-1-(5-phospho-beta-D-ribosyl)imidazole-4-carboxamide + L-glutamine = D-erythro-1-(imidazol-4-yl)glycerol 3-phosphate + 5-amino-1-(5-phospho-beta-D-ribosyl)imidazole-4-carboxamide + L-glutamate + H(+)</text>
        <dbReference type="Rhea" id="RHEA:24793"/>
        <dbReference type="ChEBI" id="CHEBI:15378"/>
        <dbReference type="ChEBI" id="CHEBI:29985"/>
        <dbReference type="ChEBI" id="CHEBI:58278"/>
        <dbReference type="ChEBI" id="CHEBI:58359"/>
        <dbReference type="ChEBI" id="CHEBI:58475"/>
        <dbReference type="ChEBI" id="CHEBI:58525"/>
        <dbReference type="EC" id="4.3.2.10"/>
    </reaction>
</comment>
<comment type="catalytic activity">
    <reaction evidence="1">
        <text>L-glutamine + H2O = L-glutamate + NH4(+)</text>
        <dbReference type="Rhea" id="RHEA:15889"/>
        <dbReference type="ChEBI" id="CHEBI:15377"/>
        <dbReference type="ChEBI" id="CHEBI:28938"/>
        <dbReference type="ChEBI" id="CHEBI:29985"/>
        <dbReference type="ChEBI" id="CHEBI:58359"/>
        <dbReference type="EC" id="3.5.1.2"/>
    </reaction>
</comment>
<comment type="pathway">
    <text evidence="1">Amino-acid biosynthesis; L-histidine biosynthesis; L-histidine from 5-phospho-alpha-D-ribose 1-diphosphate: step 5/9.</text>
</comment>
<comment type="subunit">
    <text evidence="1">Heterodimer of HisH and HisF.</text>
</comment>
<comment type="subcellular location">
    <subcellularLocation>
        <location evidence="1">Cytoplasm</location>
    </subcellularLocation>
</comment>
<keyword id="KW-0028">Amino-acid biosynthesis</keyword>
<keyword id="KW-0963">Cytoplasm</keyword>
<keyword id="KW-0315">Glutamine amidotransferase</keyword>
<keyword id="KW-0368">Histidine biosynthesis</keyword>
<keyword id="KW-0378">Hydrolase</keyword>
<keyword id="KW-0456">Lyase</keyword>
<proteinExistence type="inferred from homology"/>
<accession>Q31AG5</accession>
<reference key="1">
    <citation type="journal article" date="2006" name="Science">
        <title>Genomic islands and the ecology and evolution of Prochlorococcus.</title>
        <authorList>
            <person name="Coleman M.L."/>
            <person name="Sullivan M.B."/>
            <person name="Martiny A.C."/>
            <person name="Steglich C."/>
            <person name="Barry K."/>
            <person name="Delong E.F."/>
            <person name="Chisholm S.W."/>
        </authorList>
    </citation>
    <scope>NUCLEOTIDE SEQUENCE [LARGE SCALE GENOMIC DNA]</scope>
    <source>
        <strain>MIT 9312</strain>
    </source>
</reference>
<feature type="chain" id="PRO_0000231745" description="Imidazole glycerol phosphate synthase subunit HisH">
    <location>
        <begin position="1"/>
        <end position="205"/>
    </location>
</feature>
<feature type="domain" description="Glutamine amidotransferase type-1" evidence="1">
    <location>
        <begin position="3"/>
        <end position="205"/>
    </location>
</feature>
<feature type="active site" description="Nucleophile" evidence="1">
    <location>
        <position position="81"/>
    </location>
</feature>
<feature type="active site" evidence="1">
    <location>
        <position position="185"/>
    </location>
</feature>
<feature type="active site" evidence="1">
    <location>
        <position position="187"/>
    </location>
</feature>
<name>HIS5_PROM9</name>
<organism>
    <name type="scientific">Prochlorococcus marinus (strain MIT 9312)</name>
    <dbReference type="NCBI Taxonomy" id="74546"/>
    <lineage>
        <taxon>Bacteria</taxon>
        <taxon>Bacillati</taxon>
        <taxon>Cyanobacteriota</taxon>
        <taxon>Cyanophyceae</taxon>
        <taxon>Synechococcales</taxon>
        <taxon>Prochlorococcaceae</taxon>
        <taxon>Prochlorococcus</taxon>
    </lineage>
</organism>
<sequence>MHKIGLIDYGMGNIHSVTKSLESLGEEIILIKNFSESKACKAIILPGVGAFDPAMINLINTDLIIDLKNWINSGKSFLGICLGLQLLFESSDEGKVQGLGILKGKIQKIPNIVNQRIPHMGWCELLPTKTNTLLELEELNNWVYFVHSYHAIPDDFSIIAAQVNYGSEKLTAMIENDNLLACQFHPEKSGKTGEKLLRRWLSNIQ</sequence>
<protein>
    <recommendedName>
        <fullName evidence="1">Imidazole glycerol phosphate synthase subunit HisH</fullName>
        <ecNumber evidence="1">4.3.2.10</ecNumber>
    </recommendedName>
    <alternativeName>
        <fullName evidence="1">IGP synthase glutaminase subunit</fullName>
        <ecNumber evidence="1">3.5.1.2</ecNumber>
    </alternativeName>
    <alternativeName>
        <fullName evidence="1">IGP synthase subunit HisH</fullName>
    </alternativeName>
    <alternativeName>
        <fullName evidence="1">ImGP synthase subunit HisH</fullName>
        <shortName evidence="1">IGPS subunit HisH</shortName>
    </alternativeName>
</protein>
<dbReference type="EC" id="4.3.2.10" evidence="1"/>
<dbReference type="EC" id="3.5.1.2" evidence="1"/>
<dbReference type="EMBL" id="CP000111">
    <property type="protein sequence ID" value="ABB50130.1"/>
    <property type="molecule type" value="Genomic_DNA"/>
</dbReference>
<dbReference type="RefSeq" id="WP_011376621.1">
    <property type="nucleotide sequence ID" value="NC_007577.1"/>
</dbReference>
<dbReference type="SMR" id="Q31AG5"/>
<dbReference type="STRING" id="74546.PMT9312_1071"/>
<dbReference type="KEGG" id="pmi:PMT9312_1071"/>
<dbReference type="eggNOG" id="COG0118">
    <property type="taxonomic scope" value="Bacteria"/>
</dbReference>
<dbReference type="HOGENOM" id="CLU_071837_2_2_3"/>
<dbReference type="OrthoDB" id="9807137at2"/>
<dbReference type="UniPathway" id="UPA00031">
    <property type="reaction ID" value="UER00010"/>
</dbReference>
<dbReference type="Proteomes" id="UP000002715">
    <property type="component" value="Chromosome"/>
</dbReference>
<dbReference type="GO" id="GO:0005737">
    <property type="term" value="C:cytoplasm"/>
    <property type="evidence" value="ECO:0007669"/>
    <property type="project" value="UniProtKB-SubCell"/>
</dbReference>
<dbReference type="GO" id="GO:0004359">
    <property type="term" value="F:glutaminase activity"/>
    <property type="evidence" value="ECO:0007669"/>
    <property type="project" value="UniProtKB-EC"/>
</dbReference>
<dbReference type="GO" id="GO:0000107">
    <property type="term" value="F:imidazoleglycerol-phosphate synthase activity"/>
    <property type="evidence" value="ECO:0007669"/>
    <property type="project" value="UniProtKB-UniRule"/>
</dbReference>
<dbReference type="GO" id="GO:0016829">
    <property type="term" value="F:lyase activity"/>
    <property type="evidence" value="ECO:0007669"/>
    <property type="project" value="UniProtKB-KW"/>
</dbReference>
<dbReference type="GO" id="GO:0000105">
    <property type="term" value="P:L-histidine biosynthetic process"/>
    <property type="evidence" value="ECO:0007669"/>
    <property type="project" value="UniProtKB-UniRule"/>
</dbReference>
<dbReference type="CDD" id="cd01748">
    <property type="entry name" value="GATase1_IGP_Synthase"/>
    <property type="match status" value="1"/>
</dbReference>
<dbReference type="Gene3D" id="3.40.50.880">
    <property type="match status" value="1"/>
</dbReference>
<dbReference type="HAMAP" id="MF_00278">
    <property type="entry name" value="HisH"/>
    <property type="match status" value="1"/>
</dbReference>
<dbReference type="InterPro" id="IPR029062">
    <property type="entry name" value="Class_I_gatase-like"/>
</dbReference>
<dbReference type="InterPro" id="IPR017926">
    <property type="entry name" value="GATASE"/>
</dbReference>
<dbReference type="InterPro" id="IPR010139">
    <property type="entry name" value="Imidazole-glycPsynth_HisH"/>
</dbReference>
<dbReference type="NCBIfam" id="TIGR01855">
    <property type="entry name" value="IMP_synth_hisH"/>
    <property type="match status" value="1"/>
</dbReference>
<dbReference type="PANTHER" id="PTHR42701">
    <property type="entry name" value="IMIDAZOLE GLYCEROL PHOSPHATE SYNTHASE SUBUNIT HISH"/>
    <property type="match status" value="1"/>
</dbReference>
<dbReference type="PANTHER" id="PTHR42701:SF1">
    <property type="entry name" value="IMIDAZOLE GLYCEROL PHOSPHATE SYNTHASE SUBUNIT HISH"/>
    <property type="match status" value="1"/>
</dbReference>
<dbReference type="Pfam" id="PF00117">
    <property type="entry name" value="GATase"/>
    <property type="match status" value="1"/>
</dbReference>
<dbReference type="PIRSF" id="PIRSF000495">
    <property type="entry name" value="Amidotransf_hisH"/>
    <property type="match status" value="1"/>
</dbReference>
<dbReference type="SUPFAM" id="SSF52317">
    <property type="entry name" value="Class I glutamine amidotransferase-like"/>
    <property type="match status" value="1"/>
</dbReference>
<dbReference type="PROSITE" id="PS51273">
    <property type="entry name" value="GATASE_TYPE_1"/>
    <property type="match status" value="1"/>
</dbReference>